<organism>
    <name type="scientific">Lithobates berlandieri</name>
    <name type="common">Rio Grande leopard frog</name>
    <name type="synonym">Rana berlandieri</name>
    <dbReference type="NCBI Taxonomy" id="30360"/>
    <lineage>
        <taxon>Eukaryota</taxon>
        <taxon>Metazoa</taxon>
        <taxon>Chordata</taxon>
        <taxon>Craniata</taxon>
        <taxon>Vertebrata</taxon>
        <taxon>Euteleostomi</taxon>
        <taxon>Amphibia</taxon>
        <taxon>Batrachia</taxon>
        <taxon>Anura</taxon>
        <taxon>Neobatrachia</taxon>
        <taxon>Ranoidea</taxon>
        <taxon>Ranidae</taxon>
        <taxon>Lithobates</taxon>
    </lineage>
</organism>
<protein>
    <recommendedName>
        <fullName>Ranatuerin-2B</fullName>
    </recommendedName>
</protein>
<reference key="1">
    <citation type="journal article" date="2000" name="Eur. J. Biochem.">
        <title>Peptides with antimicrobial activity from four different families isolated from the skins of the North American frogs Rana luteiventris, Rana berlandieri and Rana pipiens.</title>
        <authorList>
            <person name="Goraya J."/>
            <person name="Wang Y."/>
            <person name="Li Z."/>
            <person name="O'Flaherty M."/>
            <person name="Knoop F.C."/>
            <person name="Platz J.E."/>
            <person name="Conlon J.M."/>
        </authorList>
    </citation>
    <scope>PROTEIN SEQUENCE</scope>
    <scope>FUNCTION</scope>
    <scope>MASS SPECTROMETRY</scope>
    <source>
        <tissue>Skin secretion</tissue>
    </source>
</reference>
<keyword id="KW-0878">Amphibian defense peptide</keyword>
<keyword id="KW-0044">Antibiotic</keyword>
<keyword id="KW-0929">Antimicrobial</keyword>
<keyword id="KW-0903">Direct protein sequencing</keyword>
<keyword id="KW-1015">Disulfide bond</keyword>
<keyword id="KW-0295">Fungicide</keyword>
<keyword id="KW-0964">Secreted</keyword>
<name>RN2B_LITBE</name>
<sequence length="28" mass="2865">GLLDTIKGVAKTVAASMLDKLKCKISGC</sequence>
<dbReference type="SMR" id="P82840"/>
<dbReference type="GO" id="GO:0005576">
    <property type="term" value="C:extracellular region"/>
    <property type="evidence" value="ECO:0007669"/>
    <property type="project" value="UniProtKB-SubCell"/>
</dbReference>
<dbReference type="GO" id="GO:0050832">
    <property type="term" value="P:defense response to fungus"/>
    <property type="evidence" value="ECO:0007669"/>
    <property type="project" value="UniProtKB-KW"/>
</dbReference>
<dbReference type="GO" id="GO:0050829">
    <property type="term" value="P:defense response to Gram-negative bacterium"/>
    <property type="evidence" value="ECO:0007669"/>
    <property type="project" value="UniProtKB-ARBA"/>
</dbReference>
<dbReference type="GO" id="GO:0031640">
    <property type="term" value="P:killing of cells of another organism"/>
    <property type="evidence" value="ECO:0007669"/>
    <property type="project" value="UniProtKB-KW"/>
</dbReference>
<dbReference type="InterPro" id="IPR012521">
    <property type="entry name" value="Antimicrobial_frog_2"/>
</dbReference>
<dbReference type="Pfam" id="PF08023">
    <property type="entry name" value="Antimicrobial_2"/>
    <property type="match status" value="1"/>
</dbReference>
<comment type="function">
    <text evidence="2">Antibacterial activity against Gram-positive bacterium S.aureus and Gram-negative bacterium E.coli. Has activity against C.albicans.</text>
</comment>
<comment type="subcellular location">
    <subcellularLocation>
        <location>Secreted</location>
    </subcellularLocation>
</comment>
<comment type="tissue specificity">
    <text>Expressed by the skin glands.</text>
</comment>
<comment type="mass spectrometry" mass="2862.0" method="Electrospray" evidence="2"/>
<comment type="similarity">
    <text evidence="3">Belongs to the frog skin active peptide (FSAP) family. Ranatuerin subfamily.</text>
</comment>
<evidence type="ECO:0000250" key="1"/>
<evidence type="ECO:0000269" key="2">
    <source>
    </source>
</evidence>
<evidence type="ECO:0000305" key="3"/>
<accession>P82840</accession>
<proteinExistence type="evidence at protein level"/>
<feature type="peptide" id="PRO_0000043558" description="Ranatuerin-2B">
    <location>
        <begin position="1"/>
        <end position="28"/>
    </location>
</feature>
<feature type="disulfide bond" evidence="1">
    <location>
        <begin position="23"/>
        <end position="28"/>
    </location>
</feature>